<organism>
    <name type="scientific">Schizosaccharomyces pombe (strain 972 / ATCC 24843)</name>
    <name type="common">Fission yeast</name>
    <dbReference type="NCBI Taxonomy" id="284812"/>
    <lineage>
        <taxon>Eukaryota</taxon>
        <taxon>Fungi</taxon>
        <taxon>Dikarya</taxon>
        <taxon>Ascomycota</taxon>
        <taxon>Taphrinomycotina</taxon>
        <taxon>Schizosaccharomycetes</taxon>
        <taxon>Schizosaccharomycetales</taxon>
        <taxon>Schizosaccharomycetaceae</taxon>
        <taxon>Schizosaccharomyces</taxon>
    </lineage>
</organism>
<feature type="chain" id="PRO_0000046105" description="Extragenic suppressor of kinetochore protein 1">
    <location>
        <begin position="1"/>
        <end position="838"/>
    </location>
</feature>
<feature type="region of interest" description="Disordered" evidence="1">
    <location>
        <begin position="411"/>
        <end position="468"/>
    </location>
</feature>
<feature type="region of interest" description="Disordered" evidence="1">
    <location>
        <begin position="690"/>
        <end position="745"/>
    </location>
</feature>
<feature type="region of interest" description="Disordered" evidence="1">
    <location>
        <begin position="757"/>
        <end position="838"/>
    </location>
</feature>
<feature type="compositionally biased region" description="Basic and acidic residues" evidence="1">
    <location>
        <begin position="423"/>
        <end position="442"/>
    </location>
</feature>
<feature type="compositionally biased region" description="Polar residues" evidence="1">
    <location>
        <begin position="448"/>
        <end position="460"/>
    </location>
</feature>
<feature type="compositionally biased region" description="Acidic residues" evidence="1">
    <location>
        <begin position="690"/>
        <end position="700"/>
    </location>
</feature>
<feature type="compositionally biased region" description="Acidic residues" evidence="1">
    <location>
        <begin position="714"/>
        <end position="723"/>
    </location>
</feature>
<feature type="compositionally biased region" description="Basic and acidic residues" evidence="1">
    <location>
        <begin position="724"/>
        <end position="734"/>
    </location>
</feature>
<feature type="compositionally biased region" description="Acidic residues" evidence="1">
    <location>
        <begin position="768"/>
        <end position="779"/>
    </location>
</feature>
<feature type="compositionally biased region" description="Acidic residues" evidence="1">
    <location>
        <begin position="806"/>
        <end position="818"/>
    </location>
</feature>
<feature type="modified residue" description="Phosphoserine" evidence="3">
    <location>
        <position position="411"/>
    </location>
</feature>
<feature type="modified residue" description="Phosphoserine" evidence="3">
    <location>
        <position position="418"/>
    </location>
</feature>
<feature type="modified residue" description="Phosphothreonine" evidence="3">
    <location>
        <position position="419"/>
    </location>
</feature>
<feature type="modified residue" description="Phosphoserine" evidence="3">
    <location>
        <position position="425"/>
    </location>
</feature>
<feature type="modified residue" description="Phosphoserine" evidence="3">
    <location>
        <position position="459"/>
    </location>
</feature>
<feature type="modified residue" description="Phosphoserine" evidence="3">
    <location>
        <position position="468"/>
    </location>
</feature>
<feature type="modified residue" description="Phosphoserine" evidence="3">
    <location>
        <position position="491"/>
    </location>
</feature>
<feature type="modified residue" description="Phosphothreonine" evidence="3">
    <location>
        <position position="493"/>
    </location>
</feature>
<feature type="modified residue" description="Phosphoserine" evidence="3">
    <location>
        <position position="494"/>
    </location>
</feature>
<feature type="modified residue" description="Phosphoserine" evidence="3">
    <location>
        <position position="711"/>
    </location>
</feature>
<feature type="modified residue" description="Phosphoserine" evidence="3">
    <location>
        <position position="713"/>
    </location>
</feature>
<protein>
    <recommendedName>
        <fullName>Extragenic suppressor of kinetochore protein 1</fullName>
    </recommendedName>
</protein>
<sequence length="838" mass="94967">MFWRLGQGFGFQSSSAIEAILDKPEDEINLKELLEENGVLDECKSHNPKLLEYLCKPEVLSQLIDYILEVDETEIPSADGGYEEPEHTRLSYIASEILSSDVWSICEACVENKTLMVKLWSFLDSEGPLNPLQASYFAKVNEHFLDKKTEETVAFIQSIDNFVEKILRHAETSAIMDLLLKFISMDRCNTAIGIADWLYSQGLIQSLLRLLSPYVDPDVQFTVADVIKAIIAISANSNEPGVIGPNSLSRELVSRQTITTLTDYMTDSKAPHSATSLINGVSIVIELIRKNNSDYDVTPVLQMPLDTHPPTTRDPIYLGTMLRLFAEKIPVFQKILLKPSTESDLMPTSFGKIKPLGFERFRICELYAELLHCSNMSLLSDPNGEAMVMQRDHLRDYLFRHNSCARDLVMSDEDDDDSTFSDKNSKDFKETEDMNGAEDMHGRAPQITKDNLNLTTTDSPMSEAEPVSEEEYKDVMETAKALHHGDDDAASDTSYEPLPESVIEDAKKLPVIGDFLKIEFIQNNVIPTILDHFFDYPWNNFLHNVVYDVVQQVLNAPMDKDQNYALAVDMFKQGKITEKIVYGQELNDKKVAKPSGFRAGYMGHLTIIADEVVKFVEHYSSTFDQELLNLINDEKWQNFVNKTLVETRNRDNQLLGGLEPSMVGYLEDMDEGEMLDANNLPEMQFALEQELESNSSDDDVVEVHRELSHNSSSNDEDDGNDEDPLSREMSRRLSFESANDSDQDNRDHFAQYMSQQISDNNANQFSSSDEDDDDDDEVVEWVSRGNENKYPRSNFFINGSDREDFSDSEEEDGNDSSDDDRGFAEEEYSDGLVLNHGK</sequence>
<reference key="1">
    <citation type="journal article" date="2003" name="EMBO J.">
        <title>The role of Ppe1/PP6 phosphatase for equal chromosome segregation in fission yeast kinetochore.</title>
        <authorList>
            <person name="Goshima G."/>
            <person name="Iwasaki O."/>
            <person name="Obuse C."/>
            <person name="Yanagida M."/>
        </authorList>
    </citation>
    <scope>NUCLEOTIDE SEQUENCE [GENOMIC DNA]</scope>
    <scope>FUNCTION</scope>
    <scope>INTERACTION WITH PPE1 AND MIS12</scope>
    <scope>SUBCELLULAR LOCATION</scope>
</reference>
<reference key="2">
    <citation type="journal article" date="2002" name="Nature">
        <title>The genome sequence of Schizosaccharomyces pombe.</title>
        <authorList>
            <person name="Wood V."/>
            <person name="Gwilliam R."/>
            <person name="Rajandream M.A."/>
            <person name="Lyne M.H."/>
            <person name="Lyne R."/>
            <person name="Stewart A."/>
            <person name="Sgouros J.G."/>
            <person name="Peat N."/>
            <person name="Hayles J."/>
            <person name="Baker S.G."/>
            <person name="Basham D."/>
            <person name="Bowman S."/>
            <person name="Brooks K."/>
            <person name="Brown D."/>
            <person name="Brown S."/>
            <person name="Chillingworth T."/>
            <person name="Churcher C.M."/>
            <person name="Collins M."/>
            <person name="Connor R."/>
            <person name="Cronin A."/>
            <person name="Davis P."/>
            <person name="Feltwell T."/>
            <person name="Fraser A."/>
            <person name="Gentles S."/>
            <person name="Goble A."/>
            <person name="Hamlin N."/>
            <person name="Harris D.E."/>
            <person name="Hidalgo J."/>
            <person name="Hodgson G."/>
            <person name="Holroyd S."/>
            <person name="Hornsby T."/>
            <person name="Howarth S."/>
            <person name="Huckle E.J."/>
            <person name="Hunt S."/>
            <person name="Jagels K."/>
            <person name="James K.D."/>
            <person name="Jones L."/>
            <person name="Jones M."/>
            <person name="Leather S."/>
            <person name="McDonald S."/>
            <person name="McLean J."/>
            <person name="Mooney P."/>
            <person name="Moule S."/>
            <person name="Mungall K.L."/>
            <person name="Murphy L.D."/>
            <person name="Niblett D."/>
            <person name="Odell C."/>
            <person name="Oliver K."/>
            <person name="O'Neil S."/>
            <person name="Pearson D."/>
            <person name="Quail M.A."/>
            <person name="Rabbinowitsch E."/>
            <person name="Rutherford K.M."/>
            <person name="Rutter S."/>
            <person name="Saunders D."/>
            <person name="Seeger K."/>
            <person name="Sharp S."/>
            <person name="Skelton J."/>
            <person name="Simmonds M.N."/>
            <person name="Squares R."/>
            <person name="Squares S."/>
            <person name="Stevens K."/>
            <person name="Taylor K."/>
            <person name="Taylor R.G."/>
            <person name="Tivey A."/>
            <person name="Walsh S.V."/>
            <person name="Warren T."/>
            <person name="Whitehead S."/>
            <person name="Woodward J.R."/>
            <person name="Volckaert G."/>
            <person name="Aert R."/>
            <person name="Robben J."/>
            <person name="Grymonprez B."/>
            <person name="Weltjens I."/>
            <person name="Vanstreels E."/>
            <person name="Rieger M."/>
            <person name="Schaefer M."/>
            <person name="Mueller-Auer S."/>
            <person name="Gabel C."/>
            <person name="Fuchs M."/>
            <person name="Duesterhoeft A."/>
            <person name="Fritzc C."/>
            <person name="Holzer E."/>
            <person name="Moestl D."/>
            <person name="Hilbert H."/>
            <person name="Borzym K."/>
            <person name="Langer I."/>
            <person name="Beck A."/>
            <person name="Lehrach H."/>
            <person name="Reinhardt R."/>
            <person name="Pohl T.M."/>
            <person name="Eger P."/>
            <person name="Zimmermann W."/>
            <person name="Wedler H."/>
            <person name="Wambutt R."/>
            <person name="Purnelle B."/>
            <person name="Goffeau A."/>
            <person name="Cadieu E."/>
            <person name="Dreano S."/>
            <person name="Gloux S."/>
            <person name="Lelaure V."/>
            <person name="Mottier S."/>
            <person name="Galibert F."/>
            <person name="Aves S.J."/>
            <person name="Xiang Z."/>
            <person name="Hunt C."/>
            <person name="Moore K."/>
            <person name="Hurst S.M."/>
            <person name="Lucas M."/>
            <person name="Rochet M."/>
            <person name="Gaillardin C."/>
            <person name="Tallada V.A."/>
            <person name="Garzon A."/>
            <person name="Thode G."/>
            <person name="Daga R.R."/>
            <person name="Cruzado L."/>
            <person name="Jimenez J."/>
            <person name="Sanchez M."/>
            <person name="del Rey F."/>
            <person name="Benito J."/>
            <person name="Dominguez A."/>
            <person name="Revuelta J.L."/>
            <person name="Moreno S."/>
            <person name="Armstrong J."/>
            <person name="Forsburg S.L."/>
            <person name="Cerutti L."/>
            <person name="Lowe T."/>
            <person name="McCombie W.R."/>
            <person name="Paulsen I."/>
            <person name="Potashkin J."/>
            <person name="Shpakovski G.V."/>
            <person name="Ussery D."/>
            <person name="Barrell B.G."/>
            <person name="Nurse P."/>
        </authorList>
    </citation>
    <scope>NUCLEOTIDE SEQUENCE [LARGE SCALE GENOMIC DNA]</scope>
    <source>
        <strain>972 / ATCC 24843</strain>
    </source>
</reference>
<reference key="3">
    <citation type="journal article" date="2008" name="J. Proteome Res.">
        <title>Phosphoproteome analysis of fission yeast.</title>
        <authorList>
            <person name="Wilson-Grady J.T."/>
            <person name="Villen J."/>
            <person name="Gygi S.P."/>
        </authorList>
    </citation>
    <scope>PHOSPHORYLATION [LARGE SCALE ANALYSIS] AT SER-411; SER-418; THR-419; SER-425; SER-459; SER-468; SER-491; THR-493; SER-494; SER-711 AND SER-713</scope>
    <scope>IDENTIFICATION BY MASS SPECTROMETRY</scope>
</reference>
<gene>
    <name type="primary">ekc1</name>
    <name type="ORF">SPCC663.01c</name>
    <name type="ORF">SPCC777.16c</name>
</gene>
<dbReference type="EMBL" id="CU329672">
    <property type="protein sequence ID" value="CAA20720.3"/>
    <property type="molecule type" value="Genomic_DNA"/>
</dbReference>
<dbReference type="PIR" id="T41532">
    <property type="entry name" value="T41532"/>
</dbReference>
<dbReference type="RefSeq" id="NP_588263.2">
    <property type="nucleotide sequence ID" value="NM_001023253.2"/>
</dbReference>
<dbReference type="SMR" id="O74511"/>
<dbReference type="BioGRID" id="276073">
    <property type="interactions" value="20"/>
</dbReference>
<dbReference type="FunCoup" id="O74511">
    <property type="interactions" value="612"/>
</dbReference>
<dbReference type="IntAct" id="O74511">
    <property type="interactions" value="2"/>
</dbReference>
<dbReference type="STRING" id="284812.O74511"/>
<dbReference type="iPTMnet" id="O74511"/>
<dbReference type="PaxDb" id="4896-SPCC663.01c.1"/>
<dbReference type="EnsemblFungi" id="SPCC663.01c.1">
    <property type="protein sequence ID" value="SPCC663.01c.1:pep"/>
    <property type="gene ID" value="SPCC663.01c"/>
</dbReference>
<dbReference type="GeneID" id="2539511"/>
<dbReference type="KEGG" id="spo:2539511"/>
<dbReference type="PomBase" id="SPCC663.01c">
    <property type="gene designation" value="ekc1"/>
</dbReference>
<dbReference type="VEuPathDB" id="FungiDB:SPCC663.01c"/>
<dbReference type="eggNOG" id="KOG2073">
    <property type="taxonomic scope" value="Eukaryota"/>
</dbReference>
<dbReference type="HOGENOM" id="CLU_003676_2_0_1"/>
<dbReference type="InParanoid" id="O74511"/>
<dbReference type="OMA" id="ECKSHNP"/>
<dbReference type="PhylomeDB" id="O74511"/>
<dbReference type="PRO" id="PR:O74511"/>
<dbReference type="Proteomes" id="UP000002485">
    <property type="component" value="Chromosome III"/>
</dbReference>
<dbReference type="GO" id="GO:0000785">
    <property type="term" value="C:chromatin"/>
    <property type="evidence" value="ECO:0000314"/>
    <property type="project" value="PomBase"/>
</dbReference>
<dbReference type="GO" id="GO:0005829">
    <property type="term" value="C:cytosol"/>
    <property type="evidence" value="ECO:0007005"/>
    <property type="project" value="PomBase"/>
</dbReference>
<dbReference type="GO" id="GO:0005654">
    <property type="term" value="C:nucleoplasm"/>
    <property type="evidence" value="ECO:0000314"/>
    <property type="project" value="PomBase"/>
</dbReference>
<dbReference type="GO" id="GO:0005634">
    <property type="term" value="C:nucleus"/>
    <property type="evidence" value="ECO:0007005"/>
    <property type="project" value="PomBase"/>
</dbReference>
<dbReference type="GO" id="GO:0008287">
    <property type="term" value="C:protein serine/threonine phosphatase complex"/>
    <property type="evidence" value="ECO:0000353"/>
    <property type="project" value="PomBase"/>
</dbReference>
<dbReference type="GO" id="GO:0072542">
    <property type="term" value="F:protein phosphatase activator activity"/>
    <property type="evidence" value="ECO:0000315"/>
    <property type="project" value="PomBase"/>
</dbReference>
<dbReference type="GO" id="GO:0019903">
    <property type="term" value="F:protein phosphatase binding"/>
    <property type="evidence" value="ECO:0007669"/>
    <property type="project" value="InterPro"/>
</dbReference>
<dbReference type="GO" id="GO:0019888">
    <property type="term" value="F:protein phosphatase regulator activity"/>
    <property type="evidence" value="ECO:0000318"/>
    <property type="project" value="GO_Central"/>
</dbReference>
<dbReference type="GO" id="GO:0051301">
    <property type="term" value="P:cell division"/>
    <property type="evidence" value="ECO:0007669"/>
    <property type="project" value="UniProtKB-KW"/>
</dbReference>
<dbReference type="GO" id="GO:1905560">
    <property type="term" value="P:negative regulation of kinetochore assembly"/>
    <property type="evidence" value="ECO:0000315"/>
    <property type="project" value="PomBase"/>
</dbReference>
<dbReference type="GO" id="GO:0009966">
    <property type="term" value="P:regulation of signal transduction"/>
    <property type="evidence" value="ECO:0000318"/>
    <property type="project" value="GO_Central"/>
</dbReference>
<dbReference type="GO" id="GO:0023052">
    <property type="term" value="P:signaling"/>
    <property type="evidence" value="ECO:0000303"/>
    <property type="project" value="PomBase"/>
</dbReference>
<dbReference type="InterPro" id="IPR007587">
    <property type="entry name" value="SAPS"/>
</dbReference>
<dbReference type="PANTHER" id="PTHR12634:SF8">
    <property type="entry name" value="FIERY MOUNTAIN, ISOFORM D"/>
    <property type="match status" value="1"/>
</dbReference>
<dbReference type="PANTHER" id="PTHR12634">
    <property type="entry name" value="SIT4 YEAST -ASSOCIATING PROTEIN-RELATED"/>
    <property type="match status" value="1"/>
</dbReference>
<dbReference type="Pfam" id="PF04499">
    <property type="entry name" value="SAPS"/>
    <property type="match status" value="1"/>
</dbReference>
<name>EKC1_SCHPO</name>
<keyword id="KW-0131">Cell cycle</keyword>
<keyword id="KW-0132">Cell division</keyword>
<keyword id="KW-0498">Mitosis</keyword>
<keyword id="KW-0539">Nucleus</keyword>
<keyword id="KW-0597">Phosphoprotein</keyword>
<keyword id="KW-1185">Reference proteome</keyword>
<evidence type="ECO:0000256" key="1">
    <source>
        <dbReference type="SAM" id="MobiDB-lite"/>
    </source>
</evidence>
<evidence type="ECO:0000269" key="2">
    <source>
    </source>
</evidence>
<evidence type="ECO:0000269" key="3">
    <source>
    </source>
</evidence>
<evidence type="ECO:0000305" key="4"/>
<proteinExistence type="evidence at protein level"/>
<accession>O74511</accession>
<accession>O74554</accession>
<comment type="function">
    <text evidence="2">Has a role in chromosome segregation. May provide a dynamic connection between kinetochore microtubules and kinetochore chromatin.</text>
</comment>
<comment type="subunit">
    <text evidence="2">Interacts with ppe1 and mis12.</text>
</comment>
<comment type="interaction">
    <interactant intactId="EBI-1153096">
        <id>O74511</id>
    </interactant>
    <interactant intactId="EBI-1153118">
        <id>P36614</id>
        <label>ppe1</label>
    </interactant>
    <organismsDiffer>false</organismsDiffer>
    <experiments>2</experiments>
</comment>
<comment type="subcellular location">
    <subcellularLocation>
        <location evidence="2">Nucleus</location>
    </subcellularLocation>
    <text>Associated with chromatin.</text>
</comment>
<comment type="similarity">
    <text evidence="4">Belongs to the SAPS family.</text>
</comment>
<comment type="sequence caution" evidence="4">
    <conflict type="erroneous gene model prediction" ref="1"/>
</comment>